<protein>
    <recommendedName>
        <fullName>DnaJ homolog subfamily B member 5</fullName>
    </recommendedName>
    <alternativeName>
        <fullName>Heat shock protein Hsp40-3</fullName>
    </alternativeName>
    <alternativeName>
        <fullName>Heat shock protein cognate 40</fullName>
        <shortName>Hsc40</shortName>
    </alternativeName>
</protein>
<name>DNJB5_MOUSE</name>
<feature type="chain" id="PRO_0000071024" description="DnaJ homolog subfamily B member 5">
    <location>
        <begin position="1"/>
        <end position="348"/>
    </location>
</feature>
<feature type="domain" description="J" evidence="1">
    <location>
        <begin position="4"/>
        <end position="68"/>
    </location>
</feature>
<keyword id="KW-0143">Chaperone</keyword>
<keyword id="KW-1185">Reference proteome</keyword>
<gene>
    <name type="primary">Dnajb5</name>
    <name type="synonym">Hsc40</name>
</gene>
<organism>
    <name type="scientific">Mus musculus</name>
    <name type="common">Mouse</name>
    <dbReference type="NCBI Taxonomy" id="10090"/>
    <lineage>
        <taxon>Eukaryota</taxon>
        <taxon>Metazoa</taxon>
        <taxon>Chordata</taxon>
        <taxon>Craniata</taxon>
        <taxon>Vertebrata</taxon>
        <taxon>Euteleostomi</taxon>
        <taxon>Mammalia</taxon>
        <taxon>Eutheria</taxon>
        <taxon>Euarchontoglires</taxon>
        <taxon>Glires</taxon>
        <taxon>Rodentia</taxon>
        <taxon>Myomorpha</taxon>
        <taxon>Muroidea</taxon>
        <taxon>Muridae</taxon>
        <taxon>Murinae</taxon>
        <taxon>Mus</taxon>
        <taxon>Mus</taxon>
    </lineage>
</organism>
<comment type="induction">
    <text>Expressed under normal conditions, its expression can further be increased after various stress treatments.</text>
</comment>
<proteinExistence type="evidence at transcript level"/>
<dbReference type="EMBL" id="AF092536">
    <property type="protein sequence ID" value="AAC64141.1"/>
    <property type="molecule type" value="Genomic_DNA"/>
</dbReference>
<dbReference type="EMBL" id="AF088983">
    <property type="protein sequence ID" value="AAC35861.1"/>
    <property type="molecule type" value="mRNA"/>
</dbReference>
<dbReference type="EMBL" id="AF321322">
    <property type="protein sequence ID" value="AAG53972.1"/>
    <property type="molecule type" value="mRNA"/>
</dbReference>
<dbReference type="EMBL" id="BC048902">
    <property type="protein sequence ID" value="AAH48902.1"/>
    <property type="molecule type" value="mRNA"/>
</dbReference>
<dbReference type="EMBL" id="BC057087">
    <property type="protein sequence ID" value="AAH57087.1"/>
    <property type="molecule type" value="mRNA"/>
</dbReference>
<dbReference type="CCDS" id="CCDS18084.1"/>
<dbReference type="RefSeq" id="NP_001342369.1">
    <property type="nucleotide sequence ID" value="NM_001355440.1"/>
</dbReference>
<dbReference type="RefSeq" id="NP_001361096.1">
    <property type="nucleotide sequence ID" value="NM_001374167.1"/>
</dbReference>
<dbReference type="RefSeq" id="NP_001361097.1">
    <property type="nucleotide sequence ID" value="NM_001374168.1"/>
</dbReference>
<dbReference type="RefSeq" id="NP_063927.1">
    <property type="nucleotide sequence ID" value="NM_019874.3"/>
</dbReference>
<dbReference type="RefSeq" id="XP_006538174.1">
    <property type="nucleotide sequence ID" value="XM_006538111.3"/>
</dbReference>
<dbReference type="RefSeq" id="XP_006538175.1">
    <property type="nucleotide sequence ID" value="XM_006538112.3"/>
</dbReference>
<dbReference type="SMR" id="O89114"/>
<dbReference type="BioGRID" id="207903">
    <property type="interactions" value="2"/>
</dbReference>
<dbReference type="FunCoup" id="O89114">
    <property type="interactions" value="2140"/>
</dbReference>
<dbReference type="IntAct" id="O89114">
    <property type="interactions" value="1"/>
</dbReference>
<dbReference type="MINT" id="O89114"/>
<dbReference type="STRING" id="10090.ENSMUSP00000081712"/>
<dbReference type="GlyGen" id="O89114">
    <property type="glycosylation" value="1 site, 1 O-linked glycan (1 site)"/>
</dbReference>
<dbReference type="iPTMnet" id="O89114"/>
<dbReference type="PhosphoSitePlus" id="O89114"/>
<dbReference type="jPOST" id="O89114"/>
<dbReference type="PaxDb" id="10090-ENSMUSP00000081712"/>
<dbReference type="ProteomicsDB" id="279456"/>
<dbReference type="Antibodypedia" id="11397">
    <property type="antibodies" value="187 antibodies from 27 providers"/>
</dbReference>
<dbReference type="DNASU" id="56323"/>
<dbReference type="Ensembl" id="ENSMUST00000084662.12">
    <property type="protein sequence ID" value="ENSMUSP00000081712.6"/>
    <property type="gene ID" value="ENSMUSG00000036052.15"/>
</dbReference>
<dbReference type="Ensembl" id="ENSMUST00000098112.9">
    <property type="protein sequence ID" value="ENSMUSP00000095716.3"/>
    <property type="gene ID" value="ENSMUSG00000036052.15"/>
</dbReference>
<dbReference type="Ensembl" id="ENSMUST00000107973.3">
    <property type="protein sequence ID" value="ENSMUSP00000103607.3"/>
    <property type="gene ID" value="ENSMUSG00000036052.15"/>
</dbReference>
<dbReference type="GeneID" id="56323"/>
<dbReference type="UCSC" id="uc008som.1">
    <property type="organism name" value="mouse"/>
</dbReference>
<dbReference type="AGR" id="MGI:1930018"/>
<dbReference type="MGI" id="MGI:1930018">
    <property type="gene designation" value="Dnajb5"/>
</dbReference>
<dbReference type="VEuPathDB" id="HostDB:ENSMUSG00000036052"/>
<dbReference type="eggNOG" id="KOG0714">
    <property type="taxonomic scope" value="Eukaryota"/>
</dbReference>
<dbReference type="GeneTree" id="ENSGT00940000156090"/>
<dbReference type="HOGENOM" id="CLU_017633_0_0_1"/>
<dbReference type="InParanoid" id="O89114"/>
<dbReference type="TreeFam" id="TF105141"/>
<dbReference type="BioGRID-ORCS" id="56323">
    <property type="hits" value="0 hits in 78 CRISPR screens"/>
</dbReference>
<dbReference type="CD-CODE" id="CE726F99">
    <property type="entry name" value="Postsynaptic density"/>
</dbReference>
<dbReference type="ChiTaRS" id="Dnajb5">
    <property type="organism name" value="mouse"/>
</dbReference>
<dbReference type="PRO" id="PR:O89114"/>
<dbReference type="Proteomes" id="UP000000589">
    <property type="component" value="Chromosome 4"/>
</dbReference>
<dbReference type="RNAct" id="O89114">
    <property type="molecule type" value="protein"/>
</dbReference>
<dbReference type="Bgee" id="ENSMUSG00000036052">
    <property type="expression patterns" value="Expressed in embryonic brain and 263 other cell types or tissues"/>
</dbReference>
<dbReference type="ExpressionAtlas" id="O89114">
    <property type="expression patterns" value="baseline and differential"/>
</dbReference>
<dbReference type="GO" id="GO:0005829">
    <property type="term" value="C:cytosol"/>
    <property type="evidence" value="ECO:0000314"/>
    <property type="project" value="MGI"/>
</dbReference>
<dbReference type="GO" id="GO:0005634">
    <property type="term" value="C:nucleus"/>
    <property type="evidence" value="ECO:0000314"/>
    <property type="project" value="MGI"/>
</dbReference>
<dbReference type="GO" id="GO:0051087">
    <property type="term" value="F:protein-folding chaperone binding"/>
    <property type="evidence" value="ECO:0007669"/>
    <property type="project" value="Ensembl"/>
</dbReference>
<dbReference type="GO" id="GO:0051082">
    <property type="term" value="F:unfolded protein binding"/>
    <property type="evidence" value="ECO:0000250"/>
    <property type="project" value="MGI"/>
</dbReference>
<dbReference type="GO" id="GO:0000122">
    <property type="term" value="P:negative regulation of transcription by RNA polymerase II"/>
    <property type="evidence" value="ECO:0000316"/>
    <property type="project" value="MGI"/>
</dbReference>
<dbReference type="GO" id="GO:0006457">
    <property type="term" value="P:protein folding"/>
    <property type="evidence" value="ECO:0007669"/>
    <property type="project" value="InterPro"/>
</dbReference>
<dbReference type="GO" id="GO:0006986">
    <property type="term" value="P:response to unfolded protein"/>
    <property type="evidence" value="ECO:0007669"/>
    <property type="project" value="Ensembl"/>
</dbReference>
<dbReference type="CDD" id="cd06257">
    <property type="entry name" value="DnaJ"/>
    <property type="match status" value="1"/>
</dbReference>
<dbReference type="CDD" id="cd10747">
    <property type="entry name" value="DnaJ_C"/>
    <property type="match status" value="1"/>
</dbReference>
<dbReference type="FunFam" id="1.10.287.110:FF:000005">
    <property type="entry name" value="DnaJ (Hsp40) homolog, subfamily B, member 4"/>
    <property type="match status" value="1"/>
</dbReference>
<dbReference type="FunFam" id="2.60.260.20:FF:000002">
    <property type="entry name" value="Dnaj homolog subfamily b member"/>
    <property type="match status" value="1"/>
</dbReference>
<dbReference type="FunFam" id="2.60.260.20:FF:000007">
    <property type="entry name" value="dnaJ homolog subfamily B member 5"/>
    <property type="match status" value="1"/>
</dbReference>
<dbReference type="Gene3D" id="1.10.287.110">
    <property type="entry name" value="DnaJ domain"/>
    <property type="match status" value="1"/>
</dbReference>
<dbReference type="Gene3D" id="2.60.260.20">
    <property type="entry name" value="Urease metallochaperone UreE, N-terminal domain"/>
    <property type="match status" value="2"/>
</dbReference>
<dbReference type="InterPro" id="IPR002939">
    <property type="entry name" value="DnaJ_C"/>
</dbReference>
<dbReference type="InterPro" id="IPR001623">
    <property type="entry name" value="DnaJ_domain"/>
</dbReference>
<dbReference type="InterPro" id="IPR018253">
    <property type="entry name" value="DnaJ_domain_CS"/>
</dbReference>
<dbReference type="InterPro" id="IPR051339">
    <property type="entry name" value="DnaJ_subfamily_B"/>
</dbReference>
<dbReference type="InterPro" id="IPR008971">
    <property type="entry name" value="HSP40/DnaJ_pept-bd"/>
</dbReference>
<dbReference type="InterPro" id="IPR036869">
    <property type="entry name" value="J_dom_sf"/>
</dbReference>
<dbReference type="PANTHER" id="PTHR24078:SF553">
    <property type="entry name" value="DNAJ HOMOLOG SUBFAMILY B MEMBER 5"/>
    <property type="match status" value="1"/>
</dbReference>
<dbReference type="PANTHER" id="PTHR24078">
    <property type="entry name" value="DNAJ HOMOLOG SUBFAMILY C MEMBER"/>
    <property type="match status" value="1"/>
</dbReference>
<dbReference type="Pfam" id="PF00226">
    <property type="entry name" value="DnaJ"/>
    <property type="match status" value="1"/>
</dbReference>
<dbReference type="Pfam" id="PF01556">
    <property type="entry name" value="DnaJ_C"/>
    <property type="match status" value="1"/>
</dbReference>
<dbReference type="PRINTS" id="PR00625">
    <property type="entry name" value="JDOMAIN"/>
</dbReference>
<dbReference type="SMART" id="SM00271">
    <property type="entry name" value="DnaJ"/>
    <property type="match status" value="1"/>
</dbReference>
<dbReference type="SUPFAM" id="SSF46565">
    <property type="entry name" value="Chaperone J-domain"/>
    <property type="match status" value="1"/>
</dbReference>
<dbReference type="SUPFAM" id="SSF49493">
    <property type="entry name" value="HSP40/DnaJ peptide-binding domain"/>
    <property type="match status" value="2"/>
</dbReference>
<dbReference type="PROSITE" id="PS00636">
    <property type="entry name" value="DNAJ_1"/>
    <property type="match status" value="1"/>
</dbReference>
<dbReference type="PROSITE" id="PS50076">
    <property type="entry name" value="DNAJ_2"/>
    <property type="match status" value="1"/>
</dbReference>
<reference key="1">
    <citation type="journal article" date="1999" name="Gene">
        <title>Hsc40, a new member of the hsp40 family, exhibits similar expression profile to that of hsc70 in mammalian cells.</title>
        <authorList>
            <person name="Chen M.-S."/>
            <person name="Roti J.R."/>
            <person name="Laszlo A."/>
        </authorList>
    </citation>
    <scope>NUCLEOTIDE SEQUENCE [GENOMIC DNA]</scope>
</reference>
<reference key="2">
    <citation type="journal article" date="2004" name="Genome Res.">
        <title>The status, quality, and expansion of the NIH full-length cDNA project: the Mammalian Gene Collection (MGC).</title>
        <authorList>
            <consortium name="The MGC Project Team"/>
        </authorList>
    </citation>
    <scope>NUCLEOTIDE SEQUENCE [LARGE SCALE MRNA]</scope>
    <source>
        <strain>C57BL/6J</strain>
        <tissue>Brain</tissue>
        <tissue>Colon</tissue>
    </source>
</reference>
<sequence length="348" mass="39119">MGKDYYKILGIPSGANEDEIKKAYRKMALKYHPDKNKEPNAEEKFKEIAEAYDVLSDPKKRSLYDQYGEEGLKTGGGSSGGSGGSFHYTFHGDPHATFASFFGGSNPFDIFFASSRSTRPFSGFDPDDMDVDEDEDPFGAFGRFGFNGLSRGPRRAPEPLYPRRKVQDPPVVHELRVSLEEIYHGSTKRMKITRRRLNPDGRTVRTEDKILHIVIKRGWKEGTKITFPKEGDATPDNIPADIVFVLKDKPHAHFRRDGTNVLYSALISLKEALCGCTVNIPTIDGRVIPLPCNDVIKPGTVKRLRGEGLPFPKVPTQRGDLIVEFKVRFPDRLTPQTRQILKQHLPCS</sequence>
<evidence type="ECO:0000255" key="1">
    <source>
        <dbReference type="PROSITE-ProRule" id="PRU00286"/>
    </source>
</evidence>
<accession>O89114</accession>